<organism>
    <name type="scientific">Geobacillus thermodenitrificans (strain NG80-2)</name>
    <dbReference type="NCBI Taxonomy" id="420246"/>
    <lineage>
        <taxon>Bacteria</taxon>
        <taxon>Bacillati</taxon>
        <taxon>Bacillota</taxon>
        <taxon>Bacilli</taxon>
        <taxon>Bacillales</taxon>
        <taxon>Anoxybacillaceae</taxon>
        <taxon>Geobacillus</taxon>
    </lineage>
</organism>
<protein>
    <recommendedName>
        <fullName evidence="1">Large ribosomal subunit protein bL17</fullName>
    </recommendedName>
    <alternativeName>
        <fullName evidence="2">50S ribosomal protein L17</fullName>
    </alternativeName>
</protein>
<reference key="1">
    <citation type="journal article" date="2007" name="Proc. Natl. Acad. Sci. U.S.A.">
        <title>Genome and proteome of long-chain alkane degrading Geobacillus thermodenitrificans NG80-2 isolated from a deep-subsurface oil reservoir.</title>
        <authorList>
            <person name="Feng L."/>
            <person name="Wang W."/>
            <person name="Cheng J."/>
            <person name="Ren Y."/>
            <person name="Zhao G."/>
            <person name="Gao C."/>
            <person name="Tang Y."/>
            <person name="Liu X."/>
            <person name="Han W."/>
            <person name="Peng X."/>
            <person name="Liu R."/>
            <person name="Wang L."/>
        </authorList>
    </citation>
    <scope>NUCLEOTIDE SEQUENCE [LARGE SCALE GENOMIC DNA]</scope>
    <source>
        <strain>NG80-2</strain>
    </source>
</reference>
<keyword id="KW-0687">Ribonucleoprotein</keyword>
<keyword id="KW-0689">Ribosomal protein</keyword>
<feature type="chain" id="PRO_1000055834" description="Large ribosomal subunit protein bL17">
    <location>
        <begin position="1"/>
        <end position="120"/>
    </location>
</feature>
<accession>A4IJL5</accession>
<name>RL17_GEOTN</name>
<dbReference type="EMBL" id="CP000557">
    <property type="protein sequence ID" value="ABO65519.1"/>
    <property type="molecule type" value="Genomic_DNA"/>
</dbReference>
<dbReference type="RefSeq" id="WP_008881917.1">
    <property type="nucleotide sequence ID" value="NC_009328.1"/>
</dbReference>
<dbReference type="SMR" id="A4IJL5"/>
<dbReference type="GeneID" id="87622298"/>
<dbReference type="KEGG" id="gtn:GTNG_0132"/>
<dbReference type="eggNOG" id="COG0203">
    <property type="taxonomic scope" value="Bacteria"/>
</dbReference>
<dbReference type="HOGENOM" id="CLU_074407_2_2_9"/>
<dbReference type="Proteomes" id="UP000001578">
    <property type="component" value="Chromosome"/>
</dbReference>
<dbReference type="GO" id="GO:0022625">
    <property type="term" value="C:cytosolic large ribosomal subunit"/>
    <property type="evidence" value="ECO:0007669"/>
    <property type="project" value="TreeGrafter"/>
</dbReference>
<dbReference type="GO" id="GO:0003735">
    <property type="term" value="F:structural constituent of ribosome"/>
    <property type="evidence" value="ECO:0007669"/>
    <property type="project" value="InterPro"/>
</dbReference>
<dbReference type="GO" id="GO:0006412">
    <property type="term" value="P:translation"/>
    <property type="evidence" value="ECO:0007669"/>
    <property type="project" value="UniProtKB-UniRule"/>
</dbReference>
<dbReference type="FunFam" id="3.90.1030.10:FF:000002">
    <property type="entry name" value="50S ribosomal protein L17"/>
    <property type="match status" value="1"/>
</dbReference>
<dbReference type="Gene3D" id="3.90.1030.10">
    <property type="entry name" value="Ribosomal protein L17"/>
    <property type="match status" value="1"/>
</dbReference>
<dbReference type="HAMAP" id="MF_01368">
    <property type="entry name" value="Ribosomal_bL17"/>
    <property type="match status" value="1"/>
</dbReference>
<dbReference type="InterPro" id="IPR000456">
    <property type="entry name" value="Ribosomal_bL17"/>
</dbReference>
<dbReference type="InterPro" id="IPR047859">
    <property type="entry name" value="Ribosomal_bL17_CS"/>
</dbReference>
<dbReference type="InterPro" id="IPR036373">
    <property type="entry name" value="Ribosomal_bL17_sf"/>
</dbReference>
<dbReference type="NCBIfam" id="TIGR00059">
    <property type="entry name" value="L17"/>
    <property type="match status" value="1"/>
</dbReference>
<dbReference type="PANTHER" id="PTHR14413:SF16">
    <property type="entry name" value="LARGE RIBOSOMAL SUBUNIT PROTEIN BL17M"/>
    <property type="match status" value="1"/>
</dbReference>
<dbReference type="PANTHER" id="PTHR14413">
    <property type="entry name" value="RIBOSOMAL PROTEIN L17"/>
    <property type="match status" value="1"/>
</dbReference>
<dbReference type="Pfam" id="PF01196">
    <property type="entry name" value="Ribosomal_L17"/>
    <property type="match status" value="1"/>
</dbReference>
<dbReference type="SUPFAM" id="SSF64263">
    <property type="entry name" value="Prokaryotic ribosomal protein L17"/>
    <property type="match status" value="1"/>
</dbReference>
<dbReference type="PROSITE" id="PS01167">
    <property type="entry name" value="RIBOSOMAL_L17"/>
    <property type="match status" value="1"/>
</dbReference>
<comment type="subunit">
    <text evidence="1">Part of the 50S ribosomal subunit. Contacts protein L32.</text>
</comment>
<comment type="similarity">
    <text evidence="1">Belongs to the bacterial ribosomal protein bL17 family.</text>
</comment>
<proteinExistence type="inferred from homology"/>
<sequence length="120" mass="13598">MSYRKLGRTTSQRKALLRDLATDLIINERIETTEARAKELRSVIEKMITLGKRGDLHARRQAAAFIRNEVANSETGQDALQKLFSDIAPRYQDRQGGYTRIMKLGPRRGDGAPMVIIELV</sequence>
<evidence type="ECO:0000255" key="1">
    <source>
        <dbReference type="HAMAP-Rule" id="MF_01368"/>
    </source>
</evidence>
<evidence type="ECO:0000305" key="2"/>
<gene>
    <name evidence="1" type="primary">rplQ</name>
    <name type="ordered locus">GTNG_0132</name>
</gene>